<evidence type="ECO:0000255" key="1">
    <source>
        <dbReference type="PROSITE-ProRule" id="PRU00214"/>
    </source>
</evidence>
<evidence type="ECO:0000255" key="2">
    <source>
        <dbReference type="PROSITE-ProRule" id="PRU00449"/>
    </source>
</evidence>
<evidence type="ECO:0000256" key="3">
    <source>
        <dbReference type="SAM" id="MobiDB-lite"/>
    </source>
</evidence>
<evidence type="ECO:0000269" key="4">
    <source>
    </source>
</evidence>
<evidence type="ECO:0000305" key="5">
    <source>
    </source>
</evidence>
<proteinExistence type="evidence at transcript level"/>
<gene>
    <name type="primary">ZFAND4</name>
    <name type="synonym">ANUBL1</name>
</gene>
<keyword id="KW-0479">Metal-binding</keyword>
<keyword id="KW-1185">Reference proteome</keyword>
<keyword id="KW-0862">Zinc</keyword>
<keyword id="KW-0863">Zinc-finger</keyword>
<protein>
    <recommendedName>
        <fullName>AN1-type zinc finger protein 4</fullName>
    </recommendedName>
    <alternativeName>
        <fullName>AN1-type zinc finger and ubiquitin domain-containing protein-like 1</fullName>
    </alternativeName>
</protein>
<reference key="1">
    <citation type="journal article" date="2004" name="Nat. Genet.">
        <title>Complete sequencing and characterization of 21,243 full-length human cDNAs.</title>
        <authorList>
            <person name="Ota T."/>
            <person name="Suzuki Y."/>
            <person name="Nishikawa T."/>
            <person name="Otsuki T."/>
            <person name="Sugiyama T."/>
            <person name="Irie R."/>
            <person name="Wakamatsu A."/>
            <person name="Hayashi K."/>
            <person name="Sato H."/>
            <person name="Nagai K."/>
            <person name="Kimura K."/>
            <person name="Makita H."/>
            <person name="Sekine M."/>
            <person name="Obayashi M."/>
            <person name="Nishi T."/>
            <person name="Shibahara T."/>
            <person name="Tanaka T."/>
            <person name="Ishii S."/>
            <person name="Yamamoto J."/>
            <person name="Saito K."/>
            <person name="Kawai Y."/>
            <person name="Isono Y."/>
            <person name="Nakamura Y."/>
            <person name="Nagahari K."/>
            <person name="Murakami K."/>
            <person name="Yasuda T."/>
            <person name="Iwayanagi T."/>
            <person name="Wagatsuma M."/>
            <person name="Shiratori A."/>
            <person name="Sudo H."/>
            <person name="Hosoiri T."/>
            <person name="Kaku Y."/>
            <person name="Kodaira H."/>
            <person name="Kondo H."/>
            <person name="Sugawara M."/>
            <person name="Takahashi M."/>
            <person name="Kanda K."/>
            <person name="Yokoi T."/>
            <person name="Furuya T."/>
            <person name="Kikkawa E."/>
            <person name="Omura Y."/>
            <person name="Abe K."/>
            <person name="Kamihara K."/>
            <person name="Katsuta N."/>
            <person name="Sato K."/>
            <person name="Tanikawa M."/>
            <person name="Yamazaki M."/>
            <person name="Ninomiya K."/>
            <person name="Ishibashi T."/>
            <person name="Yamashita H."/>
            <person name="Murakawa K."/>
            <person name="Fujimori K."/>
            <person name="Tanai H."/>
            <person name="Kimata M."/>
            <person name="Watanabe M."/>
            <person name="Hiraoka S."/>
            <person name="Chiba Y."/>
            <person name="Ishida S."/>
            <person name="Ono Y."/>
            <person name="Takiguchi S."/>
            <person name="Watanabe S."/>
            <person name="Yosida M."/>
            <person name="Hotuta T."/>
            <person name="Kusano J."/>
            <person name="Kanehori K."/>
            <person name="Takahashi-Fujii A."/>
            <person name="Hara H."/>
            <person name="Tanase T.-O."/>
            <person name="Nomura Y."/>
            <person name="Togiya S."/>
            <person name="Komai F."/>
            <person name="Hara R."/>
            <person name="Takeuchi K."/>
            <person name="Arita M."/>
            <person name="Imose N."/>
            <person name="Musashino K."/>
            <person name="Yuuki H."/>
            <person name="Oshima A."/>
            <person name="Sasaki N."/>
            <person name="Aotsuka S."/>
            <person name="Yoshikawa Y."/>
            <person name="Matsunawa H."/>
            <person name="Ichihara T."/>
            <person name="Shiohata N."/>
            <person name="Sano S."/>
            <person name="Moriya S."/>
            <person name="Momiyama H."/>
            <person name="Satoh N."/>
            <person name="Takami S."/>
            <person name="Terashima Y."/>
            <person name="Suzuki O."/>
            <person name="Nakagawa S."/>
            <person name="Senoh A."/>
            <person name="Mizoguchi H."/>
            <person name="Goto Y."/>
            <person name="Shimizu F."/>
            <person name="Wakebe H."/>
            <person name="Hishigaki H."/>
            <person name="Watanabe T."/>
            <person name="Sugiyama A."/>
            <person name="Takemoto M."/>
            <person name="Kawakami B."/>
            <person name="Yamazaki M."/>
            <person name="Watanabe K."/>
            <person name="Kumagai A."/>
            <person name="Itakura S."/>
            <person name="Fukuzumi Y."/>
            <person name="Fujimori Y."/>
            <person name="Komiyama M."/>
            <person name="Tashiro H."/>
            <person name="Tanigami A."/>
            <person name="Fujiwara T."/>
            <person name="Ono T."/>
            <person name="Yamada K."/>
            <person name="Fujii Y."/>
            <person name="Ozaki K."/>
            <person name="Hirao M."/>
            <person name="Ohmori Y."/>
            <person name="Kawabata A."/>
            <person name="Hikiji T."/>
            <person name="Kobatake N."/>
            <person name="Inagaki H."/>
            <person name="Ikema Y."/>
            <person name="Okamoto S."/>
            <person name="Okitani R."/>
            <person name="Kawakami T."/>
            <person name="Noguchi S."/>
            <person name="Itoh T."/>
            <person name="Shigeta K."/>
            <person name="Senba T."/>
            <person name="Matsumura K."/>
            <person name="Nakajima Y."/>
            <person name="Mizuno T."/>
            <person name="Morinaga M."/>
            <person name="Sasaki M."/>
            <person name="Togashi T."/>
            <person name="Oyama M."/>
            <person name="Hata H."/>
            <person name="Watanabe M."/>
            <person name="Komatsu T."/>
            <person name="Mizushima-Sugano J."/>
            <person name="Satoh T."/>
            <person name="Shirai Y."/>
            <person name="Takahashi Y."/>
            <person name="Nakagawa K."/>
            <person name="Okumura K."/>
            <person name="Nagase T."/>
            <person name="Nomura N."/>
            <person name="Kikuchi H."/>
            <person name="Masuho Y."/>
            <person name="Yamashita R."/>
            <person name="Nakai K."/>
            <person name="Yada T."/>
            <person name="Nakamura Y."/>
            <person name="Ohara O."/>
            <person name="Isogai T."/>
            <person name="Sugano S."/>
        </authorList>
    </citation>
    <scope>NUCLEOTIDE SEQUENCE [LARGE SCALE MRNA]</scope>
    <scope>VARIANT THR-118</scope>
    <source>
        <tissue>Testis</tissue>
    </source>
</reference>
<reference key="2">
    <citation type="journal article" date="2004" name="Nature">
        <title>The DNA sequence and comparative analysis of human chromosome 10.</title>
        <authorList>
            <person name="Deloukas P."/>
            <person name="Earthrowl M.E."/>
            <person name="Grafham D.V."/>
            <person name="Rubenfield M."/>
            <person name="French L."/>
            <person name="Steward C.A."/>
            <person name="Sims S.K."/>
            <person name="Jones M.C."/>
            <person name="Searle S."/>
            <person name="Scott C."/>
            <person name="Howe K."/>
            <person name="Hunt S.E."/>
            <person name="Andrews T.D."/>
            <person name="Gilbert J.G.R."/>
            <person name="Swarbreck D."/>
            <person name="Ashurst J.L."/>
            <person name="Taylor A."/>
            <person name="Battles J."/>
            <person name="Bird C.P."/>
            <person name="Ainscough R."/>
            <person name="Almeida J.P."/>
            <person name="Ashwell R.I.S."/>
            <person name="Ambrose K.D."/>
            <person name="Babbage A.K."/>
            <person name="Bagguley C.L."/>
            <person name="Bailey J."/>
            <person name="Banerjee R."/>
            <person name="Bates K."/>
            <person name="Beasley H."/>
            <person name="Bray-Allen S."/>
            <person name="Brown A.J."/>
            <person name="Brown J.Y."/>
            <person name="Burford D.C."/>
            <person name="Burrill W."/>
            <person name="Burton J."/>
            <person name="Cahill P."/>
            <person name="Camire D."/>
            <person name="Carter N.P."/>
            <person name="Chapman J.C."/>
            <person name="Clark S.Y."/>
            <person name="Clarke G."/>
            <person name="Clee C.M."/>
            <person name="Clegg S."/>
            <person name="Corby N."/>
            <person name="Coulson A."/>
            <person name="Dhami P."/>
            <person name="Dutta I."/>
            <person name="Dunn M."/>
            <person name="Faulkner L."/>
            <person name="Frankish A."/>
            <person name="Frankland J.A."/>
            <person name="Garner P."/>
            <person name="Garnett J."/>
            <person name="Gribble S."/>
            <person name="Griffiths C."/>
            <person name="Grocock R."/>
            <person name="Gustafson E."/>
            <person name="Hammond S."/>
            <person name="Harley J.L."/>
            <person name="Hart E."/>
            <person name="Heath P.D."/>
            <person name="Ho T.P."/>
            <person name="Hopkins B."/>
            <person name="Horne J."/>
            <person name="Howden P.J."/>
            <person name="Huckle E."/>
            <person name="Hynds C."/>
            <person name="Johnson C."/>
            <person name="Johnson D."/>
            <person name="Kana A."/>
            <person name="Kay M."/>
            <person name="Kimberley A.M."/>
            <person name="Kershaw J.K."/>
            <person name="Kokkinaki M."/>
            <person name="Laird G.K."/>
            <person name="Lawlor S."/>
            <person name="Lee H.M."/>
            <person name="Leongamornlert D.A."/>
            <person name="Laird G."/>
            <person name="Lloyd C."/>
            <person name="Lloyd D.M."/>
            <person name="Loveland J."/>
            <person name="Lovell J."/>
            <person name="McLaren S."/>
            <person name="McLay K.E."/>
            <person name="McMurray A."/>
            <person name="Mashreghi-Mohammadi M."/>
            <person name="Matthews L."/>
            <person name="Milne S."/>
            <person name="Nickerson T."/>
            <person name="Nguyen M."/>
            <person name="Overton-Larty E."/>
            <person name="Palmer S.A."/>
            <person name="Pearce A.V."/>
            <person name="Peck A.I."/>
            <person name="Pelan S."/>
            <person name="Phillimore B."/>
            <person name="Porter K."/>
            <person name="Rice C.M."/>
            <person name="Rogosin A."/>
            <person name="Ross M.T."/>
            <person name="Sarafidou T."/>
            <person name="Sehra H.K."/>
            <person name="Shownkeen R."/>
            <person name="Skuce C.D."/>
            <person name="Smith M."/>
            <person name="Standring L."/>
            <person name="Sycamore N."/>
            <person name="Tester J."/>
            <person name="Thorpe A."/>
            <person name="Torcasso W."/>
            <person name="Tracey A."/>
            <person name="Tromans A."/>
            <person name="Tsolas J."/>
            <person name="Wall M."/>
            <person name="Walsh J."/>
            <person name="Wang H."/>
            <person name="Weinstock K."/>
            <person name="West A.P."/>
            <person name="Willey D.L."/>
            <person name="Whitehead S.L."/>
            <person name="Wilming L."/>
            <person name="Wray P.W."/>
            <person name="Young L."/>
            <person name="Chen Y."/>
            <person name="Lovering R.C."/>
            <person name="Moschonas N.K."/>
            <person name="Siebert R."/>
            <person name="Fechtel K."/>
            <person name="Bentley D."/>
            <person name="Durbin R.M."/>
            <person name="Hubbard T."/>
            <person name="Doucette-Stamm L."/>
            <person name="Beck S."/>
            <person name="Smith D.R."/>
            <person name="Rogers J."/>
        </authorList>
    </citation>
    <scope>NUCLEOTIDE SEQUENCE [LARGE SCALE GENOMIC DNA]</scope>
</reference>
<reference key="3">
    <citation type="submission" date="2005-07" db="EMBL/GenBank/DDBJ databases">
        <authorList>
            <person name="Mural R.J."/>
            <person name="Istrail S."/>
            <person name="Sutton G.G."/>
            <person name="Florea L."/>
            <person name="Halpern A.L."/>
            <person name="Mobarry C.M."/>
            <person name="Lippert R."/>
            <person name="Walenz B."/>
            <person name="Shatkay H."/>
            <person name="Dew I."/>
            <person name="Miller J.R."/>
            <person name="Flanigan M.J."/>
            <person name="Edwards N.J."/>
            <person name="Bolanos R."/>
            <person name="Fasulo D."/>
            <person name="Halldorsson B.V."/>
            <person name="Hannenhalli S."/>
            <person name="Turner R."/>
            <person name="Yooseph S."/>
            <person name="Lu F."/>
            <person name="Nusskern D.R."/>
            <person name="Shue B.C."/>
            <person name="Zheng X.H."/>
            <person name="Zhong F."/>
            <person name="Delcher A.L."/>
            <person name="Huson D.H."/>
            <person name="Kravitz S.A."/>
            <person name="Mouchard L."/>
            <person name="Reinert K."/>
            <person name="Remington K.A."/>
            <person name="Clark A.G."/>
            <person name="Waterman M.S."/>
            <person name="Eichler E.E."/>
            <person name="Adams M.D."/>
            <person name="Hunkapiller M.W."/>
            <person name="Myers E.W."/>
            <person name="Venter J.C."/>
        </authorList>
    </citation>
    <scope>NUCLEOTIDE SEQUENCE [LARGE SCALE GENOMIC DNA]</scope>
</reference>
<reference key="4">
    <citation type="journal article" date="2004" name="Genome Res.">
        <title>The status, quality, and expansion of the NIH full-length cDNA project: the Mammalian Gene Collection (MGC).</title>
        <authorList>
            <consortium name="The MGC Project Team"/>
        </authorList>
    </citation>
    <scope>NUCLEOTIDE SEQUENCE [LARGE SCALE MRNA]</scope>
    <source>
        <tissue>Testis</tissue>
    </source>
</reference>
<reference key="5">
    <citation type="journal article" date="2009" name="Mol. Cell. Proteomics">
        <title>A strategy for precise and large scale identification of core fucosylated glycoproteins.</title>
        <authorList>
            <person name="Jia W."/>
            <person name="Lu Z."/>
            <person name="Fu Y."/>
            <person name="Wang H.P."/>
            <person name="Wang L.H."/>
            <person name="Chi H."/>
            <person name="Yuan Z.F."/>
            <person name="Zheng Z.B."/>
            <person name="Song L.N."/>
            <person name="Han H.H."/>
            <person name="Liang Y.M."/>
            <person name="Wang J.L."/>
            <person name="Cai Y."/>
            <person name="Zhang Y.K."/>
            <person name="Deng Y.L."/>
            <person name="Ying W.T."/>
            <person name="He S.M."/>
            <person name="Qian X.H."/>
        </authorList>
    </citation>
    <scope>IDENTIFICATION</scope>
</reference>
<sequence>MDNRKEPPFFNDDNMGPFYYRLHFCDTMELFIETLTGTCFELRVSPFETVISVKAKIRRLEGIPICRQHLIWNNMELENDYCLNDYNISEGCTLKLVLAMRGGPINTRRVPTDDPLRKMAEYLDSSRVEVWEKTSCSKQVTFLVYQEGDQLNFFPAVDRGDGTLTPLSDSSKKIDFHLHVLRRKGEHRMSGGSMYNSDTDEDEETEPSSSGQQIIENSITMNKMKLLKAKMKNMNLSKKPKKAVKIKPHPPVAPRPSSGSTAPSRHRLLRVLPNIGQSCSPAFGNAYPPEISRNGISSLATQLSAERYISSITGEFLKEDNSWENNTLSHFSSNVKLPPQIPHLELGNDQELADSVLHLGSSLPRQTKHFLGNLPSSNGNIVLPSEECVTEQSLLPKVGSLASFAEGNADEQSSGLEGACKVNLELLLTNADKGLKAPEQHLKHVAGVLNGESVETSVLNYRELSPHKNRLLSPLRCSAPMSLHNSLVKPERQSKCFEFGKLQPSSSQSLDVQNITDSSFSRTTCFQGVKVDSLGKRSDVISKVEARDITEMTNKASKEPVGCVNNISFLASLAGSTSRNRLQSTRGAGRLQNSGTGLSTNLQHFQEENFRKSSPQLEHTGVFLSTHGVGMNGNNAAAGKSVGECTTHHLPPVKAPLQTKKKTTNHCFLCGKKTGLASSYECRCGNNFCASHRYAETHGCTYDYKSAGRRYLHEANPVVNAPKLPKI</sequence>
<dbReference type="EMBL" id="AK292469">
    <property type="protein sequence ID" value="BAF85158.1"/>
    <property type="molecule type" value="mRNA"/>
</dbReference>
<dbReference type="EMBL" id="AK314395">
    <property type="protein sequence ID" value="BAG37019.1"/>
    <property type="molecule type" value="mRNA"/>
</dbReference>
<dbReference type="EMBL" id="AL445201">
    <property type="status" value="NOT_ANNOTATED_CDS"/>
    <property type="molecule type" value="Genomic_DNA"/>
</dbReference>
<dbReference type="EMBL" id="CH471160">
    <property type="protein sequence ID" value="EAW86653.1"/>
    <property type="molecule type" value="Genomic_DNA"/>
</dbReference>
<dbReference type="EMBL" id="BC045587">
    <property type="protein sequence ID" value="AAH45587.2"/>
    <property type="molecule type" value="mRNA"/>
</dbReference>
<dbReference type="CCDS" id="CCDS7214.1"/>
<dbReference type="RefSeq" id="NP_001121796.1">
    <property type="nucleotide sequence ID" value="NM_001128324.2"/>
</dbReference>
<dbReference type="RefSeq" id="NP_001269835.1">
    <property type="nucleotide sequence ID" value="NM_001282906.1"/>
</dbReference>
<dbReference type="RefSeq" id="NP_777550.2">
    <property type="nucleotide sequence ID" value="NM_174890.4"/>
</dbReference>
<dbReference type="SMR" id="Q86XD8"/>
<dbReference type="BioGRID" id="125033">
    <property type="interactions" value="21"/>
</dbReference>
<dbReference type="FunCoup" id="Q86XD8">
    <property type="interactions" value="437"/>
</dbReference>
<dbReference type="IntAct" id="Q86XD8">
    <property type="interactions" value="4"/>
</dbReference>
<dbReference type="STRING" id="9606.ENSP00000339484"/>
<dbReference type="GlyGen" id="Q86XD8">
    <property type="glycosylation" value="1 site, 1 O-linked glycan (1 site)"/>
</dbReference>
<dbReference type="iPTMnet" id="Q86XD8"/>
<dbReference type="PhosphoSitePlus" id="Q86XD8"/>
<dbReference type="BioMuta" id="ZFAND4"/>
<dbReference type="DMDM" id="121944435"/>
<dbReference type="MassIVE" id="Q86XD8"/>
<dbReference type="PaxDb" id="9606-ENSP00000339484"/>
<dbReference type="PeptideAtlas" id="Q86XD8"/>
<dbReference type="ProteomicsDB" id="70266"/>
<dbReference type="Antibodypedia" id="27027">
    <property type="antibodies" value="36 antibodies from 12 providers"/>
</dbReference>
<dbReference type="DNASU" id="93550"/>
<dbReference type="Ensembl" id="ENST00000344646.10">
    <property type="protein sequence ID" value="ENSP00000339484.5"/>
    <property type="gene ID" value="ENSG00000172671.20"/>
</dbReference>
<dbReference type="GeneID" id="93550"/>
<dbReference type="KEGG" id="hsa:93550"/>
<dbReference type="MANE-Select" id="ENST00000344646.10">
    <property type="protein sequence ID" value="ENSP00000339484.5"/>
    <property type="RefSeq nucleotide sequence ID" value="NM_174890.4"/>
    <property type="RefSeq protein sequence ID" value="NP_777550.2"/>
</dbReference>
<dbReference type="UCSC" id="uc001jcm.6">
    <property type="organism name" value="human"/>
</dbReference>
<dbReference type="AGR" id="HGNC:23504"/>
<dbReference type="CTD" id="93550"/>
<dbReference type="DisGeNET" id="93550"/>
<dbReference type="GeneCards" id="ZFAND4"/>
<dbReference type="HGNC" id="HGNC:23504">
    <property type="gene designation" value="ZFAND4"/>
</dbReference>
<dbReference type="HPA" id="ENSG00000172671">
    <property type="expression patterns" value="Tissue enriched (testis)"/>
</dbReference>
<dbReference type="neXtProt" id="NX_Q86XD8"/>
<dbReference type="OpenTargets" id="ENSG00000172671"/>
<dbReference type="PharmGKB" id="PA134976557"/>
<dbReference type="VEuPathDB" id="HostDB:ENSG00000172671"/>
<dbReference type="eggNOG" id="KOG0001">
    <property type="taxonomic scope" value="Eukaryota"/>
</dbReference>
<dbReference type="eggNOG" id="KOG3173">
    <property type="taxonomic scope" value="Eukaryota"/>
</dbReference>
<dbReference type="GeneTree" id="ENSGT00940000155716"/>
<dbReference type="HOGENOM" id="CLU_022981_0_0_1"/>
<dbReference type="InParanoid" id="Q86XD8"/>
<dbReference type="OMA" id="ECRCGHN"/>
<dbReference type="OrthoDB" id="756206at2759"/>
<dbReference type="PAN-GO" id="Q86XD8">
    <property type="GO annotations" value="0 GO annotations based on evolutionary models"/>
</dbReference>
<dbReference type="PhylomeDB" id="Q86XD8"/>
<dbReference type="TreeFam" id="TF329607"/>
<dbReference type="PathwayCommons" id="Q86XD8"/>
<dbReference type="SignaLink" id="Q86XD8"/>
<dbReference type="BioGRID-ORCS" id="93550">
    <property type="hits" value="9 hits in 1183 CRISPR screens"/>
</dbReference>
<dbReference type="ChiTaRS" id="ZFAND4">
    <property type="organism name" value="human"/>
</dbReference>
<dbReference type="GenomeRNAi" id="93550"/>
<dbReference type="Pharos" id="Q86XD8">
    <property type="development level" value="Tdark"/>
</dbReference>
<dbReference type="PRO" id="PR:Q86XD8"/>
<dbReference type="Proteomes" id="UP000005640">
    <property type="component" value="Chromosome 10"/>
</dbReference>
<dbReference type="RNAct" id="Q86XD8">
    <property type="molecule type" value="protein"/>
</dbReference>
<dbReference type="Bgee" id="ENSG00000172671">
    <property type="expression patterns" value="Expressed in sperm and 133 other cell types or tissues"/>
</dbReference>
<dbReference type="ExpressionAtlas" id="Q86XD8">
    <property type="expression patterns" value="baseline and differential"/>
</dbReference>
<dbReference type="GO" id="GO:0008270">
    <property type="term" value="F:zinc ion binding"/>
    <property type="evidence" value="ECO:0007669"/>
    <property type="project" value="UniProtKB-KW"/>
</dbReference>
<dbReference type="CDD" id="cd01802">
    <property type="entry name" value="Ubl_ZFAND4"/>
    <property type="match status" value="1"/>
</dbReference>
<dbReference type="Gene3D" id="4.10.1110.10">
    <property type="entry name" value="AN1-like Zinc finger"/>
    <property type="match status" value="1"/>
</dbReference>
<dbReference type="Gene3D" id="3.10.20.90">
    <property type="entry name" value="Phosphatidylinositol 3-kinase Catalytic Subunit, Chain A, domain 1"/>
    <property type="match status" value="1"/>
</dbReference>
<dbReference type="InterPro" id="IPR035896">
    <property type="entry name" value="AN1-like_Znf"/>
</dbReference>
<dbReference type="InterPro" id="IPR053061">
    <property type="entry name" value="AN1-type_zinc_finger"/>
</dbReference>
<dbReference type="InterPro" id="IPR000626">
    <property type="entry name" value="Ubiquitin-like_dom"/>
</dbReference>
<dbReference type="InterPro" id="IPR029071">
    <property type="entry name" value="Ubiquitin-like_domsf"/>
</dbReference>
<dbReference type="InterPro" id="IPR019956">
    <property type="entry name" value="Ubiquitin_dom"/>
</dbReference>
<dbReference type="InterPro" id="IPR000058">
    <property type="entry name" value="Znf_AN1"/>
</dbReference>
<dbReference type="PANTHER" id="PTHR46728">
    <property type="entry name" value="AN1-TYPE ZINC FINGER PROTEIN 4"/>
    <property type="match status" value="1"/>
</dbReference>
<dbReference type="PANTHER" id="PTHR46728:SF1">
    <property type="entry name" value="AN1-TYPE ZINC FINGER PROTEIN 4"/>
    <property type="match status" value="1"/>
</dbReference>
<dbReference type="Pfam" id="PF00240">
    <property type="entry name" value="ubiquitin"/>
    <property type="match status" value="1"/>
</dbReference>
<dbReference type="Pfam" id="PF01428">
    <property type="entry name" value="zf-AN1"/>
    <property type="match status" value="1"/>
</dbReference>
<dbReference type="PRINTS" id="PR00348">
    <property type="entry name" value="UBIQUITIN"/>
</dbReference>
<dbReference type="SMART" id="SM00213">
    <property type="entry name" value="UBQ"/>
    <property type="match status" value="1"/>
</dbReference>
<dbReference type="SMART" id="SM00154">
    <property type="entry name" value="ZnF_AN1"/>
    <property type="match status" value="1"/>
</dbReference>
<dbReference type="SUPFAM" id="SSF118310">
    <property type="entry name" value="AN1-like Zinc finger"/>
    <property type="match status" value="1"/>
</dbReference>
<dbReference type="SUPFAM" id="SSF54236">
    <property type="entry name" value="Ubiquitin-like"/>
    <property type="match status" value="1"/>
</dbReference>
<dbReference type="PROSITE" id="PS50053">
    <property type="entry name" value="UBIQUITIN_2"/>
    <property type="match status" value="1"/>
</dbReference>
<dbReference type="PROSITE" id="PS51039">
    <property type="entry name" value="ZF_AN1"/>
    <property type="match status" value="1"/>
</dbReference>
<comment type="caution">
    <text evidence="5">A report observed N-glycosylation at Asn-235 (PubMed:19139490). However, as the protein is not predicted to localize in an extracellular compartment of the cell, additional evidence is required to confirm this result.</text>
</comment>
<feature type="chain" id="PRO_0000269892" description="AN1-type zinc finger protein 4">
    <location>
        <begin position="1"/>
        <end position="727"/>
    </location>
</feature>
<feature type="domain" description="Ubiquitin-like" evidence="1">
    <location>
        <begin position="28"/>
        <end position="103"/>
    </location>
</feature>
<feature type="zinc finger region" description="AN1-type" evidence="2">
    <location>
        <begin position="661"/>
        <end position="708"/>
    </location>
</feature>
<feature type="region of interest" description="Disordered" evidence="3">
    <location>
        <begin position="187"/>
        <end position="217"/>
    </location>
</feature>
<feature type="region of interest" description="Disordered" evidence="3">
    <location>
        <begin position="238"/>
        <end position="264"/>
    </location>
</feature>
<feature type="compositionally biased region" description="Basic residues" evidence="3">
    <location>
        <begin position="238"/>
        <end position="248"/>
    </location>
</feature>
<feature type="binding site" evidence="2">
    <location>
        <position position="667"/>
    </location>
    <ligand>
        <name>Zn(2+)</name>
        <dbReference type="ChEBI" id="CHEBI:29105"/>
        <label>1</label>
    </ligand>
</feature>
<feature type="binding site" evidence="2">
    <location>
        <position position="670"/>
    </location>
    <ligand>
        <name>Zn(2+)</name>
        <dbReference type="ChEBI" id="CHEBI:29105"/>
        <label>1</label>
    </ligand>
</feature>
<feature type="binding site" evidence="2">
    <location>
        <position position="682"/>
    </location>
    <ligand>
        <name>Zn(2+)</name>
        <dbReference type="ChEBI" id="CHEBI:29105"/>
        <label>2</label>
    </ligand>
</feature>
<feature type="binding site" evidence="2">
    <location>
        <position position="684"/>
    </location>
    <ligand>
        <name>Zn(2+)</name>
        <dbReference type="ChEBI" id="CHEBI:29105"/>
        <label>2</label>
    </ligand>
</feature>
<feature type="binding site" evidence="2">
    <location>
        <position position="689"/>
    </location>
    <ligand>
        <name>Zn(2+)</name>
        <dbReference type="ChEBI" id="CHEBI:29105"/>
        <label>1</label>
    </ligand>
</feature>
<feature type="binding site" evidence="2">
    <location>
        <position position="692"/>
    </location>
    <ligand>
        <name>Zn(2+)</name>
        <dbReference type="ChEBI" id="CHEBI:29105"/>
        <label>1</label>
    </ligand>
</feature>
<feature type="binding site" evidence="2">
    <location>
        <position position="698"/>
    </location>
    <ligand>
        <name>Zn(2+)</name>
        <dbReference type="ChEBI" id="CHEBI:29105"/>
        <label>2</label>
    </ligand>
</feature>
<feature type="binding site" evidence="2">
    <location>
        <position position="700"/>
    </location>
    <ligand>
        <name>Zn(2+)</name>
        <dbReference type="ChEBI" id="CHEBI:29105"/>
        <label>2</label>
    </ligand>
</feature>
<feature type="sequence variant" id="VAR_053773" description="In dbSNP:rs17854567." evidence="4">
    <original>K</original>
    <variation>T</variation>
    <location>
        <position position="118"/>
    </location>
</feature>
<feature type="sequence variant" id="VAR_053774" description="In dbSNP:rs12267385.">
    <original>H</original>
    <variation>Y</variation>
    <location>
        <position position="358"/>
    </location>
</feature>
<feature type="sequence variant" id="VAR_062163" description="In dbSNP:rs34082391.">
    <original>T</original>
    <variation>A</variation>
    <location>
        <position position="523"/>
    </location>
</feature>
<name>ZFAN4_HUMAN</name>
<organism>
    <name type="scientific">Homo sapiens</name>
    <name type="common">Human</name>
    <dbReference type="NCBI Taxonomy" id="9606"/>
    <lineage>
        <taxon>Eukaryota</taxon>
        <taxon>Metazoa</taxon>
        <taxon>Chordata</taxon>
        <taxon>Craniata</taxon>
        <taxon>Vertebrata</taxon>
        <taxon>Euteleostomi</taxon>
        <taxon>Mammalia</taxon>
        <taxon>Eutheria</taxon>
        <taxon>Euarchontoglires</taxon>
        <taxon>Primates</taxon>
        <taxon>Haplorrhini</taxon>
        <taxon>Catarrhini</taxon>
        <taxon>Hominidae</taxon>
        <taxon>Homo</taxon>
    </lineage>
</organism>
<accession>Q86XD8</accession>
<accession>A8K8V4</accession>
<accession>B2RAX2</accession>
<accession>Q5VVY5</accession>